<comment type="function">
    <text evidence="1 2">Catalyzes the depolymerization of alginate by cleaving the beta-1,4 glycosidic bond between two adjacent sugar residues via a beta-elimination mechanism. Splits ManA-ManA and ManA-GulA bonds, but not GulA-ManA or GulA-GulA bonds. Also cleaves acetylated residues (PubMed:9683471). May serve to degrade mislocalized alginate that is trapped in the periplasmic space (By similarity).</text>
</comment>
<comment type="catalytic activity">
    <reaction evidence="1 2">
        <text>Eliminative cleavage of alginate to give oligosaccharides with 4-deoxy-alpha-L-erythro-hex-4-enuronosyl groups at their non-reducing ends and beta-D-mannuronate at their reducing end.</text>
        <dbReference type="EC" id="4.2.2.3"/>
    </reaction>
</comment>
<comment type="biophysicochemical properties">
    <phDependence>
        <text evidence="2">Optimum pH is 8.1-8.4.</text>
    </phDependence>
</comment>
<comment type="subcellular location">
    <subcellularLocation>
        <location evidence="1">Periplasm</location>
    </subcellularLocation>
</comment>
<comment type="similarity">
    <text evidence="1">Belongs to the polysaccharide lyase 5 family.</text>
</comment>
<organism>
    <name type="scientific">Azotobacter vinelandii</name>
    <dbReference type="NCBI Taxonomy" id="354"/>
    <lineage>
        <taxon>Bacteria</taxon>
        <taxon>Pseudomonadati</taxon>
        <taxon>Pseudomonadota</taxon>
        <taxon>Gammaproteobacteria</taxon>
        <taxon>Pseudomonadales</taxon>
        <taxon>Pseudomonadaceae</taxon>
        <taxon>Azotobacter</taxon>
    </lineage>
</organism>
<keyword id="KW-0456">Lyase</keyword>
<keyword id="KW-0574">Periplasm</keyword>
<keyword id="KW-0732">Signal</keyword>
<gene>
    <name evidence="1 3" type="primary">algL</name>
</gene>
<name>ALGL_AZOVI</name>
<evidence type="ECO:0000255" key="1">
    <source>
        <dbReference type="HAMAP-Rule" id="MF_00557"/>
    </source>
</evidence>
<evidence type="ECO:0000269" key="2">
    <source>
    </source>
</evidence>
<evidence type="ECO:0000303" key="3">
    <source>
    </source>
</evidence>
<protein>
    <recommendedName>
        <fullName evidence="1 3">Alginate lyase</fullName>
        <ecNumber evidence="1 2">4.2.2.3</ecNumber>
    </recommendedName>
    <alternativeName>
        <fullName evidence="1">Poly(beta-D-mannuronate) lyase</fullName>
    </alternativeName>
</protein>
<accession>O52195</accession>
<sequence>MHKTRLALSCLLGSLLLSGAVHAAEALVPPKGYYAPVDIRKGEAPACPVVPEPFTGELVFRSKYEGSDAARSTLNEEAEKAFRTKTAPITQIERGVSRMVMRYMEKGRAGDLECTLAWLDAWAEDGALLTTEYNHTGKSMRKWALGSLAGAYLRLKFSSSQPLAAYPEQARRIESWFAKVGDQVIKDWSDLPLKRINNHSYWAAWAVMAAGVATNRRPLFDWAVEQFHIAAGQVDSNGFLPNELKRRQRALAYHNYSLPPLMMVAAFALANGVDLRGDNDGALGRLAGNVLAGVEKPEPFAERAGDEDQDMEDLETDAKFSWLEPYCALYSCSPALRERKAEMGPFKNFRLGGDVTRIFDPAEKSPRSTVGKRD</sequence>
<feature type="signal peptide" evidence="1">
    <location>
        <begin position="1"/>
        <end position="23"/>
    </location>
</feature>
<feature type="chain" id="PRO_0000024916" description="Alginate lyase">
    <location>
        <begin position="24"/>
        <end position="374"/>
    </location>
</feature>
<feature type="binding site" evidence="1">
    <location>
        <begin position="62"/>
        <end position="63"/>
    </location>
    <ligand>
        <name>substrate</name>
    </ligand>
</feature>
<feature type="binding site" evidence="1">
    <location>
        <begin position="135"/>
        <end position="136"/>
    </location>
    <ligand>
        <name>substrate</name>
    </ligand>
</feature>
<feature type="binding site" evidence="1">
    <location>
        <position position="253"/>
    </location>
    <ligand>
        <name>substrate</name>
    </ligand>
</feature>
<reference key="1">
    <citation type="submission" date="1997-09" db="EMBL/GenBank/DDBJ databases">
        <authorList>
            <person name="Vazquez R.A."/>
            <person name="Alvarado D.A."/>
            <person name="Guzman J."/>
            <person name="Soberon-Chavez G."/>
            <person name="Espin G."/>
        </authorList>
    </citation>
    <scope>NUCLEOTIDE SEQUENCE [GENOMIC DNA]</scope>
    <source>
        <strain>ATCC 9046</strain>
    </source>
</reference>
<reference key="2">
    <citation type="journal article" date="1998" name="J. Bacteriol.">
        <title>Biochemical properties and substrate specificities of a recombinantly produced Azotobacter vinelandii alginate lyase.</title>
        <authorList>
            <person name="Ertesvag H."/>
            <person name="Erlien F."/>
            <person name="Skjak-Braek G."/>
            <person name="Rehm B.H."/>
            <person name="Valla S."/>
        </authorList>
    </citation>
    <scope>NUCLEOTIDE SEQUENCE [GENOMIC DNA]</scope>
    <scope>FUNCTION</scope>
    <scope>CATALYTIC ACTIVITY</scope>
    <scope>SUBSTRATE SPECIFICITY</scope>
    <scope>BIOPHYSICOCHEMICAL PROPERTIES</scope>
    <source>
        <strain>E</strain>
    </source>
</reference>
<dbReference type="EC" id="4.2.2.3" evidence="1 2"/>
<dbReference type="EMBL" id="AF027499">
    <property type="protein sequence ID" value="AAC04567.1"/>
    <property type="molecule type" value="Genomic_DNA"/>
</dbReference>
<dbReference type="EMBL" id="AF037600">
    <property type="protein sequence ID" value="AAC32313.1"/>
    <property type="molecule type" value="Genomic_DNA"/>
</dbReference>
<dbReference type="RefSeq" id="WP_012699742.1">
    <property type="nucleotide sequence ID" value="NZ_FPKM01000036.1"/>
</dbReference>
<dbReference type="SMR" id="O52195"/>
<dbReference type="CAZy" id="PL5">
    <property type="family name" value="Polysaccharide Lyase Family 5"/>
</dbReference>
<dbReference type="OMA" id="KWALGSM"/>
<dbReference type="BRENDA" id="4.2.2.3">
    <property type="organism ID" value="49"/>
</dbReference>
<dbReference type="GO" id="GO:0042597">
    <property type="term" value="C:periplasmic space"/>
    <property type="evidence" value="ECO:0007669"/>
    <property type="project" value="UniProtKB-SubCell"/>
</dbReference>
<dbReference type="GO" id="GO:0045135">
    <property type="term" value="F:poly(beta-D-mannuronate) lyase activity"/>
    <property type="evidence" value="ECO:0007669"/>
    <property type="project" value="UniProtKB-UniRule"/>
</dbReference>
<dbReference type="GO" id="GO:0042122">
    <property type="term" value="P:alginic acid catabolic process"/>
    <property type="evidence" value="ECO:0007669"/>
    <property type="project" value="UniProtKB-UniRule"/>
</dbReference>
<dbReference type="CDD" id="cd00244">
    <property type="entry name" value="AlgLyase"/>
    <property type="match status" value="1"/>
</dbReference>
<dbReference type="Gene3D" id="1.50.10.100">
    <property type="entry name" value="Chondroitin AC/alginate lyase"/>
    <property type="match status" value="1"/>
</dbReference>
<dbReference type="HAMAP" id="MF_00557">
    <property type="entry name" value="Alginate_lyase"/>
    <property type="match status" value="1"/>
</dbReference>
<dbReference type="InterPro" id="IPR022859">
    <property type="entry name" value="Alginate_lyase"/>
</dbReference>
<dbReference type="InterPro" id="IPR008397">
    <property type="entry name" value="Alginate_lyase_dom"/>
</dbReference>
<dbReference type="InterPro" id="IPR008929">
    <property type="entry name" value="Chondroitin_lyas"/>
</dbReference>
<dbReference type="NCBIfam" id="NF001467">
    <property type="entry name" value="PRK00325.1-2"/>
    <property type="match status" value="1"/>
</dbReference>
<dbReference type="Pfam" id="PF05426">
    <property type="entry name" value="Alginate_lyase"/>
    <property type="match status" value="1"/>
</dbReference>
<dbReference type="SUPFAM" id="SSF48230">
    <property type="entry name" value="Chondroitin AC/alginate lyase"/>
    <property type="match status" value="1"/>
</dbReference>
<proteinExistence type="evidence at protein level"/>